<reference key="1">
    <citation type="submission" date="2007-05" db="EMBL/GenBank/DDBJ databases">
        <title>Complete sequence of chromosome of Staphylococcus aureus subsp. aureus JH9.</title>
        <authorList>
            <consortium name="US DOE Joint Genome Institute"/>
            <person name="Copeland A."/>
            <person name="Lucas S."/>
            <person name="Lapidus A."/>
            <person name="Barry K."/>
            <person name="Detter J.C."/>
            <person name="Glavina del Rio T."/>
            <person name="Hammon N."/>
            <person name="Israni S."/>
            <person name="Pitluck S."/>
            <person name="Chain P."/>
            <person name="Malfatti S."/>
            <person name="Shin M."/>
            <person name="Vergez L."/>
            <person name="Schmutz J."/>
            <person name="Larimer F."/>
            <person name="Land M."/>
            <person name="Hauser L."/>
            <person name="Kyrpides N."/>
            <person name="Kim E."/>
            <person name="Tomasz A."/>
            <person name="Richardson P."/>
        </authorList>
    </citation>
    <scope>NUCLEOTIDE SEQUENCE [LARGE SCALE GENOMIC DNA]</scope>
    <source>
        <strain>JH9</strain>
    </source>
</reference>
<evidence type="ECO:0000255" key="1">
    <source>
        <dbReference type="HAMAP-Rule" id="MF_00175"/>
    </source>
</evidence>
<evidence type="ECO:0000255" key="2">
    <source>
        <dbReference type="PROSITE-ProRule" id="PRU01250"/>
    </source>
</evidence>
<proteinExistence type="inferred from homology"/>
<dbReference type="EMBL" id="CP000703">
    <property type="protein sequence ID" value="ABQ49522.1"/>
    <property type="molecule type" value="Genomic_DNA"/>
</dbReference>
<dbReference type="RefSeq" id="WP_000472302.1">
    <property type="nucleotide sequence ID" value="NC_009487.1"/>
</dbReference>
<dbReference type="SMR" id="A5ITJ9"/>
<dbReference type="KEGG" id="saj:SaurJH9_1732"/>
<dbReference type="HOGENOM" id="CLU_014218_8_2_9"/>
<dbReference type="GO" id="GO:0009376">
    <property type="term" value="C:HslUV protease complex"/>
    <property type="evidence" value="ECO:0007669"/>
    <property type="project" value="TreeGrafter"/>
</dbReference>
<dbReference type="GO" id="GO:0005524">
    <property type="term" value="F:ATP binding"/>
    <property type="evidence" value="ECO:0007669"/>
    <property type="project" value="UniProtKB-UniRule"/>
</dbReference>
<dbReference type="GO" id="GO:0016887">
    <property type="term" value="F:ATP hydrolysis activity"/>
    <property type="evidence" value="ECO:0007669"/>
    <property type="project" value="InterPro"/>
</dbReference>
<dbReference type="GO" id="GO:0140662">
    <property type="term" value="F:ATP-dependent protein folding chaperone"/>
    <property type="evidence" value="ECO:0007669"/>
    <property type="project" value="InterPro"/>
</dbReference>
<dbReference type="GO" id="GO:0046983">
    <property type="term" value="F:protein dimerization activity"/>
    <property type="evidence" value="ECO:0007669"/>
    <property type="project" value="InterPro"/>
</dbReference>
<dbReference type="GO" id="GO:0051082">
    <property type="term" value="F:unfolded protein binding"/>
    <property type="evidence" value="ECO:0007669"/>
    <property type="project" value="UniProtKB-UniRule"/>
</dbReference>
<dbReference type="GO" id="GO:0008270">
    <property type="term" value="F:zinc ion binding"/>
    <property type="evidence" value="ECO:0007669"/>
    <property type="project" value="InterPro"/>
</dbReference>
<dbReference type="GO" id="GO:0051301">
    <property type="term" value="P:cell division"/>
    <property type="evidence" value="ECO:0007669"/>
    <property type="project" value="TreeGrafter"/>
</dbReference>
<dbReference type="GO" id="GO:0051603">
    <property type="term" value="P:proteolysis involved in protein catabolic process"/>
    <property type="evidence" value="ECO:0007669"/>
    <property type="project" value="TreeGrafter"/>
</dbReference>
<dbReference type="CDD" id="cd19497">
    <property type="entry name" value="RecA-like_ClpX"/>
    <property type="match status" value="1"/>
</dbReference>
<dbReference type="FunFam" id="1.10.8.60:FF:000002">
    <property type="entry name" value="ATP-dependent Clp protease ATP-binding subunit ClpX"/>
    <property type="match status" value="1"/>
</dbReference>
<dbReference type="FunFam" id="3.40.50.300:FF:000005">
    <property type="entry name" value="ATP-dependent Clp protease ATP-binding subunit ClpX"/>
    <property type="match status" value="1"/>
</dbReference>
<dbReference type="Gene3D" id="1.10.8.60">
    <property type="match status" value="1"/>
</dbReference>
<dbReference type="Gene3D" id="6.20.220.10">
    <property type="entry name" value="ClpX chaperone, C4-type zinc finger domain"/>
    <property type="match status" value="1"/>
</dbReference>
<dbReference type="Gene3D" id="3.40.50.300">
    <property type="entry name" value="P-loop containing nucleotide triphosphate hydrolases"/>
    <property type="match status" value="1"/>
</dbReference>
<dbReference type="HAMAP" id="MF_00175">
    <property type="entry name" value="ClpX"/>
    <property type="match status" value="1"/>
</dbReference>
<dbReference type="InterPro" id="IPR003593">
    <property type="entry name" value="AAA+_ATPase"/>
</dbReference>
<dbReference type="InterPro" id="IPR050052">
    <property type="entry name" value="ATP-dep_Clp_protease_ClpX"/>
</dbReference>
<dbReference type="InterPro" id="IPR003959">
    <property type="entry name" value="ATPase_AAA_core"/>
</dbReference>
<dbReference type="InterPro" id="IPR019489">
    <property type="entry name" value="Clp_ATPase_C"/>
</dbReference>
<dbReference type="InterPro" id="IPR004487">
    <property type="entry name" value="Clp_protease_ATP-bd_su_ClpX"/>
</dbReference>
<dbReference type="InterPro" id="IPR046425">
    <property type="entry name" value="ClpX_bact"/>
</dbReference>
<dbReference type="InterPro" id="IPR027417">
    <property type="entry name" value="P-loop_NTPase"/>
</dbReference>
<dbReference type="InterPro" id="IPR010603">
    <property type="entry name" value="Znf_CppX_C4"/>
</dbReference>
<dbReference type="InterPro" id="IPR038366">
    <property type="entry name" value="Znf_CppX_C4_sf"/>
</dbReference>
<dbReference type="NCBIfam" id="TIGR00382">
    <property type="entry name" value="clpX"/>
    <property type="match status" value="1"/>
</dbReference>
<dbReference type="NCBIfam" id="NF003745">
    <property type="entry name" value="PRK05342.1"/>
    <property type="match status" value="1"/>
</dbReference>
<dbReference type="PANTHER" id="PTHR48102:SF7">
    <property type="entry name" value="ATP-DEPENDENT CLP PROTEASE ATP-BINDING SUBUNIT CLPX-LIKE, MITOCHONDRIAL"/>
    <property type="match status" value="1"/>
</dbReference>
<dbReference type="PANTHER" id="PTHR48102">
    <property type="entry name" value="ATP-DEPENDENT CLP PROTEASE ATP-BINDING SUBUNIT CLPX-LIKE, MITOCHONDRIAL-RELATED"/>
    <property type="match status" value="1"/>
</dbReference>
<dbReference type="Pfam" id="PF07724">
    <property type="entry name" value="AAA_2"/>
    <property type="match status" value="1"/>
</dbReference>
<dbReference type="Pfam" id="PF10431">
    <property type="entry name" value="ClpB_D2-small"/>
    <property type="match status" value="1"/>
</dbReference>
<dbReference type="Pfam" id="PF06689">
    <property type="entry name" value="zf-C4_ClpX"/>
    <property type="match status" value="1"/>
</dbReference>
<dbReference type="SMART" id="SM00382">
    <property type="entry name" value="AAA"/>
    <property type="match status" value="1"/>
</dbReference>
<dbReference type="SMART" id="SM01086">
    <property type="entry name" value="ClpB_D2-small"/>
    <property type="match status" value="1"/>
</dbReference>
<dbReference type="SMART" id="SM00994">
    <property type="entry name" value="zf-C4_ClpX"/>
    <property type="match status" value="1"/>
</dbReference>
<dbReference type="SUPFAM" id="SSF57716">
    <property type="entry name" value="Glucocorticoid receptor-like (DNA-binding domain)"/>
    <property type="match status" value="1"/>
</dbReference>
<dbReference type="SUPFAM" id="SSF52540">
    <property type="entry name" value="P-loop containing nucleoside triphosphate hydrolases"/>
    <property type="match status" value="1"/>
</dbReference>
<dbReference type="PROSITE" id="PS51902">
    <property type="entry name" value="CLPX_ZB"/>
    <property type="match status" value="1"/>
</dbReference>
<comment type="function">
    <text evidence="1">ATP-dependent specificity component of the Clp protease. It directs the protease to specific substrates. Can perform chaperone functions in the absence of ClpP.</text>
</comment>
<comment type="subunit">
    <text evidence="1">Component of the ClpX-ClpP complex. Forms a hexameric ring that, in the presence of ATP, binds to fourteen ClpP subunits assembled into a disk-like structure with a central cavity, resembling the structure of eukaryotic proteasomes.</text>
</comment>
<comment type="similarity">
    <text evidence="1">Belongs to the ClpX chaperone family.</text>
</comment>
<keyword id="KW-0067">ATP-binding</keyword>
<keyword id="KW-0143">Chaperone</keyword>
<keyword id="KW-0479">Metal-binding</keyword>
<keyword id="KW-0547">Nucleotide-binding</keyword>
<keyword id="KW-0862">Zinc</keyword>
<protein>
    <recommendedName>
        <fullName evidence="1">ATP-dependent Clp protease ATP-binding subunit ClpX</fullName>
    </recommendedName>
</protein>
<accession>A5ITJ9</accession>
<organism>
    <name type="scientific">Staphylococcus aureus (strain JH9)</name>
    <dbReference type="NCBI Taxonomy" id="359786"/>
    <lineage>
        <taxon>Bacteria</taxon>
        <taxon>Bacillati</taxon>
        <taxon>Bacillota</taxon>
        <taxon>Bacilli</taxon>
        <taxon>Bacillales</taxon>
        <taxon>Staphylococcaceae</taxon>
        <taxon>Staphylococcus</taxon>
    </lineage>
</organism>
<sequence>MFKFNEDEENLKCSFCGKDQDQVKKLVAGSGVYICNECIELCSEIVEEELAQNTSEAMTELPTPKEIMDHLNEYVIGQEKAKKSLAVAVYNHYKRIQQLGPKEDDVELQKSNIALIGPTGSGKTLLAQTLAKTLNVPFAIADATSLTEAGYVGDDVENILLRLIQAADFDIDKAEKGIIYVDEIDKIARKSENTSITRDVSGEGVQQALLKILEGTTASVPPQGGRKHPNQEMIQIDTTNILFILGGAFDGIEEVIKRRLGEKVIGFSSNEADKYDEQALLAQIRPEDLQAYGLIPEFIGRVPIVANLETLDVTALKNILTQPKNALVKQYTKMLELDDVDLEFTEEALSAISEKAIERKTGARGLRSIIEESLIDIMFDVPSNENVTKVVITAQTINEETEPELYDAEGNLINNSKTSA</sequence>
<feature type="chain" id="PRO_1000077180" description="ATP-dependent Clp protease ATP-binding subunit ClpX">
    <location>
        <begin position="1"/>
        <end position="420"/>
    </location>
</feature>
<feature type="domain" description="ClpX-type ZB" evidence="2">
    <location>
        <begin position="1"/>
        <end position="54"/>
    </location>
</feature>
<feature type="binding site" evidence="2">
    <location>
        <position position="13"/>
    </location>
    <ligand>
        <name>Zn(2+)</name>
        <dbReference type="ChEBI" id="CHEBI:29105"/>
    </ligand>
</feature>
<feature type="binding site" evidence="2">
    <location>
        <position position="16"/>
    </location>
    <ligand>
        <name>Zn(2+)</name>
        <dbReference type="ChEBI" id="CHEBI:29105"/>
    </ligand>
</feature>
<feature type="binding site" evidence="2">
    <location>
        <position position="35"/>
    </location>
    <ligand>
        <name>Zn(2+)</name>
        <dbReference type="ChEBI" id="CHEBI:29105"/>
    </ligand>
</feature>
<feature type="binding site" evidence="2">
    <location>
        <position position="38"/>
    </location>
    <ligand>
        <name>Zn(2+)</name>
        <dbReference type="ChEBI" id="CHEBI:29105"/>
    </ligand>
</feature>
<feature type="binding site" evidence="1">
    <location>
        <begin position="118"/>
        <end position="125"/>
    </location>
    <ligand>
        <name>ATP</name>
        <dbReference type="ChEBI" id="CHEBI:30616"/>
    </ligand>
</feature>
<gene>
    <name evidence="1" type="primary">clpX</name>
    <name type="ordered locus">SaurJH9_1732</name>
</gene>
<name>CLPX_STAA9</name>